<comment type="function">
    <text evidence="4">May act as negative regulator of GCN5.</text>
</comment>
<comment type="catalytic activity">
    <reaction>
        <text>O-phospho-L-seryl-[protein] + H2O = L-seryl-[protein] + phosphate</text>
        <dbReference type="Rhea" id="RHEA:20629"/>
        <dbReference type="Rhea" id="RHEA-COMP:9863"/>
        <dbReference type="Rhea" id="RHEA-COMP:11604"/>
        <dbReference type="ChEBI" id="CHEBI:15377"/>
        <dbReference type="ChEBI" id="CHEBI:29999"/>
        <dbReference type="ChEBI" id="CHEBI:43474"/>
        <dbReference type="ChEBI" id="CHEBI:83421"/>
        <dbReference type="EC" id="3.1.3.16"/>
    </reaction>
</comment>
<comment type="catalytic activity">
    <reaction>
        <text>O-phospho-L-threonyl-[protein] + H2O = L-threonyl-[protein] + phosphate</text>
        <dbReference type="Rhea" id="RHEA:47004"/>
        <dbReference type="Rhea" id="RHEA-COMP:11060"/>
        <dbReference type="Rhea" id="RHEA-COMP:11605"/>
        <dbReference type="ChEBI" id="CHEBI:15377"/>
        <dbReference type="ChEBI" id="CHEBI:30013"/>
        <dbReference type="ChEBI" id="CHEBI:43474"/>
        <dbReference type="ChEBI" id="CHEBI:61977"/>
        <dbReference type="EC" id="3.1.3.16"/>
    </reaction>
</comment>
<comment type="cofactor">
    <cofactor evidence="1">
        <name>Mg(2+)</name>
        <dbReference type="ChEBI" id="CHEBI:18420"/>
    </cofactor>
    <cofactor evidence="1">
        <name>Mn(2+)</name>
        <dbReference type="ChEBI" id="CHEBI:29035"/>
    </cofactor>
    <text evidence="1">Binds 2 magnesium or manganese ions per subunit.</text>
</comment>
<comment type="subunit">
    <text evidence="4">Interacts with GCN5.</text>
</comment>
<comment type="similarity">
    <text evidence="5">Belongs to the PP2C family.</text>
</comment>
<accession>Q9LR65</accession>
<accession>Q8SBC2</accession>
<protein>
    <recommendedName>
        <fullName>Probable protein phosphatase 2C 1</fullName>
        <shortName>AtPP2C01</shortName>
        <ecNumber>3.1.3.16</ecNumber>
    </recommendedName>
    <alternativeName>
        <fullName>AtPPC6;6</fullName>
    </alternativeName>
</protein>
<evidence type="ECO:0000250" key="1"/>
<evidence type="ECO:0000255" key="2">
    <source>
        <dbReference type="PROSITE-ProRule" id="PRU01082"/>
    </source>
</evidence>
<evidence type="ECO:0000256" key="3">
    <source>
        <dbReference type="SAM" id="MobiDB-lite"/>
    </source>
</evidence>
<evidence type="ECO:0000269" key="4">
    <source>
    </source>
</evidence>
<evidence type="ECO:0000305" key="5"/>
<gene>
    <name type="primary">PPC6-6</name>
    <name type="ordered locus">At1g03590</name>
    <name type="ORF">F21B7.20</name>
</gene>
<proteinExistence type="evidence at protein level"/>
<feature type="chain" id="PRO_0000367935" description="Probable protein phosphatase 2C 1">
    <location>
        <begin position="1"/>
        <end position="462"/>
    </location>
</feature>
<feature type="domain" description="PPM-type phosphatase" evidence="2">
    <location>
        <begin position="60"/>
        <end position="362"/>
    </location>
</feature>
<feature type="region of interest" description="Disordered" evidence="3">
    <location>
        <begin position="369"/>
        <end position="394"/>
    </location>
</feature>
<feature type="region of interest" description="Disordered" evidence="3">
    <location>
        <begin position="421"/>
        <end position="443"/>
    </location>
</feature>
<feature type="compositionally biased region" description="Polar residues" evidence="3">
    <location>
        <begin position="376"/>
        <end position="385"/>
    </location>
</feature>
<feature type="compositionally biased region" description="Basic and acidic residues" evidence="3">
    <location>
        <begin position="424"/>
        <end position="434"/>
    </location>
</feature>
<feature type="binding site" evidence="1">
    <location>
        <position position="95"/>
    </location>
    <ligand>
        <name>Mn(2+)</name>
        <dbReference type="ChEBI" id="CHEBI:29035"/>
        <label>1</label>
    </ligand>
</feature>
<feature type="binding site" evidence="1">
    <location>
        <position position="95"/>
    </location>
    <ligand>
        <name>Mn(2+)</name>
        <dbReference type="ChEBI" id="CHEBI:29035"/>
        <label>2</label>
    </ligand>
</feature>
<feature type="binding site" evidence="1">
    <location>
        <position position="96"/>
    </location>
    <ligand>
        <name>Mn(2+)</name>
        <dbReference type="ChEBI" id="CHEBI:29035"/>
        <label>1</label>
    </ligand>
</feature>
<feature type="binding site" evidence="1">
    <location>
        <position position="307"/>
    </location>
    <ligand>
        <name>Mn(2+)</name>
        <dbReference type="ChEBI" id="CHEBI:29035"/>
        <label>2</label>
    </ligand>
</feature>
<feature type="binding site" evidence="1">
    <location>
        <position position="353"/>
    </location>
    <ligand>
        <name>Mn(2+)</name>
        <dbReference type="ChEBI" id="CHEBI:29035"/>
        <label>2</label>
    </ligand>
</feature>
<reference key="1">
    <citation type="journal article" date="2000" name="Nature">
        <title>Sequence and analysis of chromosome 1 of the plant Arabidopsis thaliana.</title>
        <authorList>
            <person name="Theologis A."/>
            <person name="Ecker J.R."/>
            <person name="Palm C.J."/>
            <person name="Federspiel N.A."/>
            <person name="Kaul S."/>
            <person name="White O."/>
            <person name="Alonso J."/>
            <person name="Altafi H."/>
            <person name="Araujo R."/>
            <person name="Bowman C.L."/>
            <person name="Brooks S.Y."/>
            <person name="Buehler E."/>
            <person name="Chan A."/>
            <person name="Chao Q."/>
            <person name="Chen H."/>
            <person name="Cheuk R.F."/>
            <person name="Chin C.W."/>
            <person name="Chung M.K."/>
            <person name="Conn L."/>
            <person name="Conway A.B."/>
            <person name="Conway A.R."/>
            <person name="Creasy T.H."/>
            <person name="Dewar K."/>
            <person name="Dunn P."/>
            <person name="Etgu P."/>
            <person name="Feldblyum T.V."/>
            <person name="Feng J.-D."/>
            <person name="Fong B."/>
            <person name="Fujii C.Y."/>
            <person name="Gill J.E."/>
            <person name="Goldsmith A.D."/>
            <person name="Haas B."/>
            <person name="Hansen N.F."/>
            <person name="Hughes B."/>
            <person name="Huizar L."/>
            <person name="Hunter J.L."/>
            <person name="Jenkins J."/>
            <person name="Johnson-Hopson C."/>
            <person name="Khan S."/>
            <person name="Khaykin E."/>
            <person name="Kim C.J."/>
            <person name="Koo H.L."/>
            <person name="Kremenetskaia I."/>
            <person name="Kurtz D.B."/>
            <person name="Kwan A."/>
            <person name="Lam B."/>
            <person name="Langin-Hooper S."/>
            <person name="Lee A."/>
            <person name="Lee J.M."/>
            <person name="Lenz C.A."/>
            <person name="Li J.H."/>
            <person name="Li Y.-P."/>
            <person name="Lin X."/>
            <person name="Liu S.X."/>
            <person name="Liu Z.A."/>
            <person name="Luros J.S."/>
            <person name="Maiti R."/>
            <person name="Marziali A."/>
            <person name="Militscher J."/>
            <person name="Miranda M."/>
            <person name="Nguyen M."/>
            <person name="Nierman W.C."/>
            <person name="Osborne B.I."/>
            <person name="Pai G."/>
            <person name="Peterson J."/>
            <person name="Pham P.K."/>
            <person name="Rizzo M."/>
            <person name="Rooney T."/>
            <person name="Rowley D."/>
            <person name="Sakano H."/>
            <person name="Salzberg S.L."/>
            <person name="Schwartz J.R."/>
            <person name="Shinn P."/>
            <person name="Southwick A.M."/>
            <person name="Sun H."/>
            <person name="Tallon L.J."/>
            <person name="Tambunga G."/>
            <person name="Toriumi M.J."/>
            <person name="Town C.D."/>
            <person name="Utterback T."/>
            <person name="Van Aken S."/>
            <person name="Vaysberg M."/>
            <person name="Vysotskaia V.S."/>
            <person name="Walker M."/>
            <person name="Wu D."/>
            <person name="Yu G."/>
            <person name="Fraser C.M."/>
            <person name="Venter J.C."/>
            <person name="Davis R.W."/>
        </authorList>
    </citation>
    <scope>NUCLEOTIDE SEQUENCE [LARGE SCALE GENOMIC DNA]</scope>
    <source>
        <strain>cv. Columbia</strain>
    </source>
</reference>
<reference key="2">
    <citation type="journal article" date="2017" name="Plant J.">
        <title>Araport11: a complete reannotation of the Arabidopsis thaliana reference genome.</title>
        <authorList>
            <person name="Cheng C.Y."/>
            <person name="Krishnakumar V."/>
            <person name="Chan A.P."/>
            <person name="Thibaud-Nissen F."/>
            <person name="Schobel S."/>
            <person name="Town C.D."/>
        </authorList>
    </citation>
    <scope>GENOME REANNOTATION</scope>
    <source>
        <strain>cv. Columbia</strain>
    </source>
</reference>
<reference key="3">
    <citation type="submission" date="2002-02" db="EMBL/GenBank/DDBJ databases">
        <title>Substrate specificity of type 2C protein phosphatases (PP2C) in Arabidopsis thaliana.</title>
        <authorList>
            <person name="Izumi S."/>
            <person name="Yamada M."/>
            <person name="Ohsato H."/>
            <person name="Miyazaki S."/>
            <person name="Bohnert H.J."/>
            <person name="Fukuhara T."/>
        </authorList>
    </citation>
    <scope>NUCLEOTIDE SEQUENCE [MRNA] OF 43-462</scope>
</reference>
<reference key="4">
    <citation type="journal article" date="2008" name="Biochim. Biophys. Acta">
        <title>Characterization of a phosphatase 2C protein as an interacting partner of the histone acetyltransferase GCN5 in Arabidopsis.</title>
        <authorList>
            <person name="Servet C."/>
            <person name="Benhamed M."/>
            <person name="Latrasse D."/>
            <person name="Kim W."/>
            <person name="Delarue M."/>
            <person name="Zhou D.-X."/>
        </authorList>
    </citation>
    <scope>FUNCTION</scope>
    <scope>INTERACTION WITH GCN5</scope>
</reference>
<reference key="5">
    <citation type="journal article" date="2008" name="BMC Genomics">
        <title>Genome-wide and expression analysis of protein phosphatase 2C in rice and Arabidopsis.</title>
        <authorList>
            <person name="Xue T."/>
            <person name="Wang D."/>
            <person name="Zhang S."/>
            <person name="Ehlting J."/>
            <person name="Ni F."/>
            <person name="Jacab S."/>
            <person name="Zheng C."/>
            <person name="Zhong Y."/>
        </authorList>
    </citation>
    <scope>GENE FAMILY</scope>
    <scope>NOMENCLATURE</scope>
</reference>
<sequence length="462" mass="50975">MGGCISKTSWSNEEPMHRPCLGMGCCGSKMGKRGFSDRMVSLHNLVSIPNRIIGNGKSRSSCIFTQQGRKGINQDAMIVWEDFMSKDVTFCGVFDGHGPHGHLVARKVRDSLPVKLLSLLNSIKSKQNGPIGTRASKSDSLEAEKEESTEEDKLNFLWEEAFLKSFNAMDKELRSHPNLECFCSGCTAVTIIKQGSNLYMGNIGDSRAILGSKDSNDSMIAVQLTVDLKPDLPREAERIKQCKGRVFALQDEPEVSRVWLPFDNAPGLAMARAFGDFCLKDYGVISIPEFSHRVLTDRDQFIVLASDGVWDVLSNEEVVEVVASATSRASAARLVVDSAVREWKLKYPTSKMDDCAVVCLFLDGRMDSETSDNEEQCFSSATNAVESDESQGAEPCLQRNVTVRSLSTDQENNSYGKVIAEADNAEKEKTREGEQNWSGLEGVTRVNSLVQLPRFPGEEPKT</sequence>
<name>P2C01_ARATH</name>
<dbReference type="EC" id="3.1.3.16"/>
<dbReference type="EMBL" id="AC002560">
    <property type="protein sequence ID" value="AAF86530.1"/>
    <property type="molecule type" value="Genomic_DNA"/>
</dbReference>
<dbReference type="EMBL" id="CP002684">
    <property type="protein sequence ID" value="AEE27587.1"/>
    <property type="molecule type" value="Genomic_DNA"/>
</dbReference>
<dbReference type="EMBL" id="AB079670">
    <property type="protein sequence ID" value="BAB84699.1"/>
    <property type="molecule type" value="mRNA"/>
</dbReference>
<dbReference type="PIR" id="T00901">
    <property type="entry name" value="T00901"/>
</dbReference>
<dbReference type="RefSeq" id="NP_171856.4">
    <property type="nucleotide sequence ID" value="NM_100239.8"/>
</dbReference>
<dbReference type="SMR" id="Q9LR65"/>
<dbReference type="BioGRID" id="24682">
    <property type="interactions" value="1"/>
</dbReference>
<dbReference type="FunCoup" id="Q9LR65">
    <property type="interactions" value="787"/>
</dbReference>
<dbReference type="STRING" id="3702.Q9LR65"/>
<dbReference type="iPTMnet" id="Q9LR65"/>
<dbReference type="PaxDb" id="3702-AT1G03590.1"/>
<dbReference type="ProteomicsDB" id="248788"/>
<dbReference type="EnsemblPlants" id="AT1G03590.1">
    <property type="protein sequence ID" value="AT1G03590.1"/>
    <property type="gene ID" value="AT1G03590"/>
</dbReference>
<dbReference type="GeneID" id="839447"/>
<dbReference type="Gramene" id="AT1G03590.1">
    <property type="protein sequence ID" value="AT1G03590.1"/>
    <property type="gene ID" value="AT1G03590"/>
</dbReference>
<dbReference type="KEGG" id="ath:AT1G03590"/>
<dbReference type="Araport" id="AT1G03590"/>
<dbReference type="TAIR" id="AT1G03590"/>
<dbReference type="eggNOG" id="KOG0698">
    <property type="taxonomic scope" value="Eukaryota"/>
</dbReference>
<dbReference type="HOGENOM" id="CLU_013173_6_0_1"/>
<dbReference type="InParanoid" id="Q9LR65"/>
<dbReference type="OMA" id="PCLQRNV"/>
<dbReference type="PhylomeDB" id="Q9LR65"/>
<dbReference type="PRO" id="PR:Q9LR65"/>
<dbReference type="Proteomes" id="UP000006548">
    <property type="component" value="Chromosome 1"/>
</dbReference>
<dbReference type="ExpressionAtlas" id="Q9LR65">
    <property type="expression patterns" value="baseline and differential"/>
</dbReference>
<dbReference type="GO" id="GO:0046872">
    <property type="term" value="F:metal ion binding"/>
    <property type="evidence" value="ECO:0007669"/>
    <property type="project" value="UniProtKB-KW"/>
</dbReference>
<dbReference type="GO" id="GO:0004722">
    <property type="term" value="F:protein serine/threonine phosphatase activity"/>
    <property type="evidence" value="ECO:0007669"/>
    <property type="project" value="UniProtKB-EC"/>
</dbReference>
<dbReference type="CDD" id="cd00143">
    <property type="entry name" value="PP2Cc"/>
    <property type="match status" value="1"/>
</dbReference>
<dbReference type="FunFam" id="3.60.40.10:FF:000026">
    <property type="entry name" value="probable protein phosphatase 2C 52"/>
    <property type="match status" value="1"/>
</dbReference>
<dbReference type="Gene3D" id="3.60.40.10">
    <property type="entry name" value="PPM-type phosphatase domain"/>
    <property type="match status" value="1"/>
</dbReference>
<dbReference type="InterPro" id="IPR015655">
    <property type="entry name" value="PP2C"/>
</dbReference>
<dbReference type="InterPro" id="IPR036457">
    <property type="entry name" value="PPM-type-like_dom_sf"/>
</dbReference>
<dbReference type="InterPro" id="IPR001932">
    <property type="entry name" value="PPM-type_phosphatase-like_dom"/>
</dbReference>
<dbReference type="PANTHER" id="PTHR47992">
    <property type="entry name" value="PROTEIN PHOSPHATASE"/>
    <property type="match status" value="1"/>
</dbReference>
<dbReference type="Pfam" id="PF00481">
    <property type="entry name" value="PP2C"/>
    <property type="match status" value="1"/>
</dbReference>
<dbReference type="SMART" id="SM00332">
    <property type="entry name" value="PP2Cc"/>
    <property type="match status" value="1"/>
</dbReference>
<dbReference type="SUPFAM" id="SSF81606">
    <property type="entry name" value="PP2C-like"/>
    <property type="match status" value="1"/>
</dbReference>
<dbReference type="PROSITE" id="PS51746">
    <property type="entry name" value="PPM_2"/>
    <property type="match status" value="1"/>
</dbReference>
<organism>
    <name type="scientific">Arabidopsis thaliana</name>
    <name type="common">Mouse-ear cress</name>
    <dbReference type="NCBI Taxonomy" id="3702"/>
    <lineage>
        <taxon>Eukaryota</taxon>
        <taxon>Viridiplantae</taxon>
        <taxon>Streptophyta</taxon>
        <taxon>Embryophyta</taxon>
        <taxon>Tracheophyta</taxon>
        <taxon>Spermatophyta</taxon>
        <taxon>Magnoliopsida</taxon>
        <taxon>eudicotyledons</taxon>
        <taxon>Gunneridae</taxon>
        <taxon>Pentapetalae</taxon>
        <taxon>rosids</taxon>
        <taxon>malvids</taxon>
        <taxon>Brassicales</taxon>
        <taxon>Brassicaceae</taxon>
        <taxon>Camelineae</taxon>
        <taxon>Arabidopsis</taxon>
    </lineage>
</organism>
<keyword id="KW-0378">Hydrolase</keyword>
<keyword id="KW-0460">Magnesium</keyword>
<keyword id="KW-0464">Manganese</keyword>
<keyword id="KW-0479">Metal-binding</keyword>
<keyword id="KW-0904">Protein phosphatase</keyword>
<keyword id="KW-1185">Reference proteome</keyword>